<keyword id="KW-1267">Proteomics identification</keyword>
<keyword id="KW-1185">Reference proteome</keyword>
<feature type="chain" id="PRO_0000184663" description="Testis-specific basic protein Y 1">
    <location>
        <begin position="1"/>
        <end position="125"/>
    </location>
</feature>
<feature type="region of interest" description="Disordered" evidence="1">
    <location>
        <begin position="1"/>
        <end position="125"/>
    </location>
</feature>
<feature type="compositionally biased region" description="Basic and acidic residues" evidence="1">
    <location>
        <begin position="37"/>
        <end position="46"/>
    </location>
</feature>
<feature type="compositionally biased region" description="Low complexity" evidence="1">
    <location>
        <begin position="56"/>
        <end position="84"/>
    </location>
</feature>
<comment type="function">
    <text>May mediate a process in spermatogenesis or may play a role in sex ratio distortion.</text>
</comment>
<comment type="interaction">
    <interactant intactId="EBI-8787564">
        <id>O14598</id>
    </interactant>
    <interactant intactId="EBI-6503765">
        <id>Q8IVP1</id>
        <label>SH3GL3</label>
    </interactant>
    <organismsDiffer>false</organismsDiffer>
    <experiments>3</experiments>
</comment>
<comment type="tissue specificity">
    <text>Expressed exclusively in testis.</text>
</comment>
<comment type="similarity">
    <text evidence="2">Belongs to the VCX/VCY family.</text>
</comment>
<gene>
    <name type="primary">VCY</name>
    <name type="synonym">BPY1</name>
    <name type="synonym">VCY1A</name>
</gene>
<gene>
    <name type="primary">VCY1B</name>
    <name type="synonym">BPY1B</name>
</gene>
<reference key="1">
    <citation type="journal article" date="1997" name="Science">
        <title>Functional coherence of the human Y chromosome.</title>
        <authorList>
            <person name="Lahn B.T."/>
            <person name="Page D.C."/>
        </authorList>
    </citation>
    <scope>NUCLEOTIDE SEQUENCE [MRNA]</scope>
</reference>
<reference key="2">
    <citation type="journal article" date="2003" name="Nature">
        <title>The male-specific region of the human Y chromosome is a mosaic of discrete sequence classes.</title>
        <authorList>
            <person name="Skaletsky H."/>
            <person name="Kuroda-Kawaguchi T."/>
            <person name="Minx P.J."/>
            <person name="Cordum H.S."/>
            <person name="Hillier L.W."/>
            <person name="Brown L.G."/>
            <person name="Repping S."/>
            <person name="Pyntikova T."/>
            <person name="Ali J."/>
            <person name="Bieri T."/>
            <person name="Chinwalla A."/>
            <person name="Delehaunty A."/>
            <person name="Delehaunty K."/>
            <person name="Du H."/>
            <person name="Fewell G."/>
            <person name="Fulton L."/>
            <person name="Fulton R."/>
            <person name="Graves T.A."/>
            <person name="Hou S.-F."/>
            <person name="Latrielle P."/>
            <person name="Leonard S."/>
            <person name="Mardis E."/>
            <person name="Maupin R."/>
            <person name="McPherson J."/>
            <person name="Miner T."/>
            <person name="Nash W."/>
            <person name="Nguyen C."/>
            <person name="Ozersky P."/>
            <person name="Pepin K."/>
            <person name="Rock S."/>
            <person name="Rohlfing T."/>
            <person name="Scott K."/>
            <person name="Schultz B."/>
            <person name="Strong C."/>
            <person name="Tin-Wollam A."/>
            <person name="Yang S.-P."/>
            <person name="Waterston R.H."/>
            <person name="Wilson R.K."/>
            <person name="Rozen S."/>
            <person name="Page D.C."/>
        </authorList>
    </citation>
    <scope>NUCLEOTIDE SEQUENCE [LARGE SCALE GENOMIC DNA]</scope>
</reference>
<reference key="3">
    <citation type="journal article" date="2004" name="Genome Res.">
        <title>The status, quality, and expansion of the NIH full-length cDNA project: the Mammalian Gene Collection (MGC).</title>
        <authorList>
            <consortium name="The MGC Project Team"/>
        </authorList>
    </citation>
    <scope>NUCLEOTIDE SEQUENCE [LARGE SCALE MRNA]</scope>
</reference>
<evidence type="ECO:0000256" key="1">
    <source>
        <dbReference type="SAM" id="MobiDB-lite"/>
    </source>
</evidence>
<evidence type="ECO:0000305" key="2"/>
<protein>
    <recommendedName>
        <fullName>Testis-specific basic protein Y 1</fullName>
    </recommendedName>
    <alternativeName>
        <fullName>Basic charge, Y-linked 1</fullName>
    </alternativeName>
    <alternativeName>
        <fullName>Variably charged protein Y</fullName>
    </alternativeName>
</protein>
<accession>O14598</accession>
<name>VCY1_HUMAN</name>
<sequence>MSPKPRASGPPAKAKETGKRKSSSQPSPSGPKKKTTKVAEKGEAVRGGRRGKKGAATKMAAVTAPEAESGPAAPGPSDQPSQELPQHELPPEEPVSEGTQHDPLSQESELEEPLSKGRPSTPLSP</sequence>
<dbReference type="EMBL" id="AF000979">
    <property type="protein sequence ID" value="AAC51827.1"/>
    <property type="molecule type" value="mRNA"/>
</dbReference>
<dbReference type="EMBL" id="AC006370">
    <property type="protein sequence ID" value="AAF03503.1"/>
    <property type="molecule type" value="Genomic_DNA"/>
</dbReference>
<dbReference type="EMBL" id="BC056508">
    <property type="protein sequence ID" value="AAH56508.1"/>
    <property type="molecule type" value="mRNA"/>
</dbReference>
<dbReference type="CCDS" id="CCDS56617.1"/>
<dbReference type="CCDS" id="CCDS56618.1"/>
<dbReference type="RefSeq" id="NP_004670.1">
    <property type="nucleotide sequence ID" value="NM_004679.4"/>
</dbReference>
<dbReference type="RefSeq" id="NP_870996.1">
    <property type="nucleotide sequence ID" value="NM_181880.1"/>
</dbReference>
<dbReference type="BioGRID" id="114540">
    <property type="interactions" value="8"/>
</dbReference>
<dbReference type="BioGRID" id="131701">
    <property type="interactions" value="1"/>
</dbReference>
<dbReference type="FunCoup" id="O14598">
    <property type="interactions" value="93"/>
</dbReference>
<dbReference type="IntAct" id="O14598">
    <property type="interactions" value="7"/>
</dbReference>
<dbReference type="MINT" id="O14598"/>
<dbReference type="STRING" id="9606.ENSP00000250823"/>
<dbReference type="iPTMnet" id="O14598"/>
<dbReference type="PhosphoSitePlus" id="O14598"/>
<dbReference type="BioMuta" id="VCY"/>
<dbReference type="MassIVE" id="O14598"/>
<dbReference type="PeptideAtlas" id="O14598"/>
<dbReference type="ProteomicsDB" id="48105"/>
<dbReference type="Antibodypedia" id="58314">
    <property type="antibodies" value="27 antibodies from 10 providers"/>
</dbReference>
<dbReference type="DNASU" id="353513"/>
<dbReference type="Ensembl" id="ENST00000250823.5">
    <property type="protein sequence ID" value="ENSP00000250823.4"/>
    <property type="gene ID" value="ENSG00000129862.7"/>
</dbReference>
<dbReference type="Ensembl" id="ENST00000250825.5">
    <property type="protein sequence ID" value="ENSP00000250825.4"/>
    <property type="gene ID" value="ENSG00000129864.7"/>
</dbReference>
<dbReference type="GeneID" id="353513"/>
<dbReference type="GeneID" id="9084"/>
<dbReference type="KEGG" id="hsa:353513"/>
<dbReference type="KEGG" id="hsa:9084"/>
<dbReference type="MANE-Select" id="ENST00000250823.5">
    <property type="protein sequence ID" value="ENSP00000250823.4"/>
    <property type="RefSeq nucleotide sequence ID" value="NM_181880.2"/>
    <property type="RefSeq protein sequence ID" value="NP_870996.1"/>
</dbReference>
<dbReference type="MANE-Select" id="ENST00000250825.5">
    <property type="protein sequence ID" value="ENSP00000250825.4"/>
    <property type="RefSeq nucleotide sequence ID" value="NM_004679.4"/>
    <property type="RefSeq protein sequence ID" value="NP_004670.1"/>
</dbReference>
<dbReference type="UCSC" id="uc004ftc.4">
    <property type="organism name" value="human"/>
</dbReference>
<dbReference type="AGR" id="HGNC:12668"/>
<dbReference type="AGR" id="HGNC:31751"/>
<dbReference type="CTD" id="353513"/>
<dbReference type="CTD" id="9084"/>
<dbReference type="DisGeNET" id="9084"/>
<dbReference type="GeneCards" id="VCY"/>
<dbReference type="GeneCards" id="VCY1B"/>
<dbReference type="GeneReviews" id="VCY"/>
<dbReference type="HGNC" id="HGNC:12668">
    <property type="gene designation" value="VCY"/>
</dbReference>
<dbReference type="HGNC" id="HGNC:31751">
    <property type="gene designation" value="VCY1B"/>
</dbReference>
<dbReference type="HPA" id="ENSG00000129862">
    <property type="expression patterns" value="Tissue enriched (testis)"/>
</dbReference>
<dbReference type="HPA" id="ENSG00000129864">
    <property type="expression patterns" value="Tissue enriched (testis)"/>
</dbReference>
<dbReference type="MIM" id="400012">
    <property type="type" value="gene"/>
</dbReference>
<dbReference type="MIM" id="400050">
    <property type="type" value="gene"/>
</dbReference>
<dbReference type="neXtProt" id="NX_O14598"/>
<dbReference type="OpenTargets" id="ENSG00000129862"/>
<dbReference type="PharmGKB" id="PA37291"/>
<dbReference type="VEuPathDB" id="HostDB:ENSG00000129862"/>
<dbReference type="VEuPathDB" id="HostDB:ENSG00000129864"/>
<dbReference type="GeneTree" id="ENSGT00440000034745"/>
<dbReference type="HOGENOM" id="CLU_108293_0_0_1"/>
<dbReference type="InParanoid" id="O14598"/>
<dbReference type="OMA" id="CQVPVME"/>
<dbReference type="PAN-GO" id="O14598">
    <property type="GO annotations" value="1 GO annotation based on evolutionary models"/>
</dbReference>
<dbReference type="PathwayCommons" id="O14598"/>
<dbReference type="SignaLink" id="O14598"/>
<dbReference type="BioGRID-ORCS" id="353513">
    <property type="hits" value="3 hits in 620 CRISPR screens"/>
</dbReference>
<dbReference type="BioGRID-ORCS" id="9084">
    <property type="hits" value="234 hits in 614 CRISPR screens"/>
</dbReference>
<dbReference type="Pharos" id="O14598">
    <property type="development level" value="Tdark"/>
</dbReference>
<dbReference type="PRO" id="PR:O14598"/>
<dbReference type="Proteomes" id="UP000005640">
    <property type="component" value="Chromosome Y"/>
</dbReference>
<dbReference type="RNAct" id="O14598">
    <property type="molecule type" value="protein"/>
</dbReference>
<dbReference type="Bgee" id="ENSG00000129862">
    <property type="expression patterns" value="Expressed in left testis and 29 other cell types or tissues"/>
</dbReference>
<dbReference type="GO" id="GO:0007420">
    <property type="term" value="P:brain development"/>
    <property type="evidence" value="ECO:0000318"/>
    <property type="project" value="GO_Central"/>
</dbReference>
<dbReference type="InterPro" id="IPR026653">
    <property type="entry name" value="VCX/VCY1"/>
</dbReference>
<dbReference type="PANTHER" id="PTHR15251">
    <property type="entry name" value="TESTIS-SPECIFIC BASIC PROTEIN Y 1-RELATED"/>
    <property type="match status" value="1"/>
</dbReference>
<dbReference type="PANTHER" id="PTHR15251:SF2">
    <property type="entry name" value="TESTIS-SPECIFIC BASIC PROTEIN Y 1-RELATED"/>
    <property type="match status" value="1"/>
</dbReference>
<dbReference type="Pfam" id="PF15231">
    <property type="entry name" value="VCX_VCY"/>
    <property type="match status" value="1"/>
</dbReference>
<proteinExistence type="evidence at protein level"/>
<organism>
    <name type="scientific">Homo sapiens</name>
    <name type="common">Human</name>
    <dbReference type="NCBI Taxonomy" id="9606"/>
    <lineage>
        <taxon>Eukaryota</taxon>
        <taxon>Metazoa</taxon>
        <taxon>Chordata</taxon>
        <taxon>Craniata</taxon>
        <taxon>Vertebrata</taxon>
        <taxon>Euteleostomi</taxon>
        <taxon>Mammalia</taxon>
        <taxon>Eutheria</taxon>
        <taxon>Euarchontoglires</taxon>
        <taxon>Primates</taxon>
        <taxon>Haplorrhini</taxon>
        <taxon>Catarrhini</taxon>
        <taxon>Hominidae</taxon>
        <taxon>Homo</taxon>
    </lineage>
</organism>